<organism>
    <name type="scientific">Frankia casuarinae (strain DSM 45818 / CECT 9043 / HFP020203 / CcI3)</name>
    <dbReference type="NCBI Taxonomy" id="106370"/>
    <lineage>
        <taxon>Bacteria</taxon>
        <taxon>Bacillati</taxon>
        <taxon>Actinomycetota</taxon>
        <taxon>Actinomycetes</taxon>
        <taxon>Frankiales</taxon>
        <taxon>Frankiaceae</taxon>
        <taxon>Frankia</taxon>
    </lineage>
</organism>
<keyword id="KW-0067">ATP-binding</keyword>
<keyword id="KW-0520">NAD</keyword>
<keyword id="KW-0547">Nucleotide-binding</keyword>
<keyword id="KW-0548">Nucleotidyltransferase</keyword>
<keyword id="KW-0662">Pyridine nucleotide biosynthesis</keyword>
<keyword id="KW-1185">Reference proteome</keyword>
<keyword id="KW-0808">Transferase</keyword>
<gene>
    <name evidence="1" type="primary">nadD</name>
    <name type="ordered locus">Francci3_1232</name>
</gene>
<reference key="1">
    <citation type="journal article" date="2007" name="Genome Res.">
        <title>Genome characteristics of facultatively symbiotic Frankia sp. strains reflect host range and host plant biogeography.</title>
        <authorList>
            <person name="Normand P."/>
            <person name="Lapierre P."/>
            <person name="Tisa L.S."/>
            <person name="Gogarten J.P."/>
            <person name="Alloisio N."/>
            <person name="Bagnarol E."/>
            <person name="Bassi C.A."/>
            <person name="Berry A.M."/>
            <person name="Bickhart D.M."/>
            <person name="Choisne N."/>
            <person name="Couloux A."/>
            <person name="Cournoyer B."/>
            <person name="Cruveiller S."/>
            <person name="Daubin V."/>
            <person name="Demange N."/>
            <person name="Francino M.P."/>
            <person name="Goltsman E."/>
            <person name="Huang Y."/>
            <person name="Kopp O.R."/>
            <person name="Labarre L."/>
            <person name="Lapidus A."/>
            <person name="Lavire C."/>
            <person name="Marechal J."/>
            <person name="Martinez M."/>
            <person name="Mastronunzio J.E."/>
            <person name="Mullin B.C."/>
            <person name="Niemann J."/>
            <person name="Pujic P."/>
            <person name="Rawnsley T."/>
            <person name="Rouy Z."/>
            <person name="Schenowitz C."/>
            <person name="Sellstedt A."/>
            <person name="Tavares F."/>
            <person name="Tomkins J.P."/>
            <person name="Vallenet D."/>
            <person name="Valverde C."/>
            <person name="Wall L.G."/>
            <person name="Wang Y."/>
            <person name="Medigue C."/>
            <person name="Benson D.R."/>
        </authorList>
    </citation>
    <scope>NUCLEOTIDE SEQUENCE [LARGE SCALE GENOMIC DNA]</scope>
    <source>
        <strain>DSM 45818 / CECT 9043 / HFP020203 / CcI3</strain>
    </source>
</reference>
<dbReference type="EC" id="2.7.7.18" evidence="1"/>
<dbReference type="EMBL" id="CP000249">
    <property type="protein sequence ID" value="ABD10610.1"/>
    <property type="status" value="ALT_INIT"/>
    <property type="molecule type" value="Genomic_DNA"/>
</dbReference>
<dbReference type="SMR" id="Q2JDN2"/>
<dbReference type="STRING" id="106370.Francci3_1232"/>
<dbReference type="KEGG" id="fra:Francci3_1232"/>
<dbReference type="eggNOG" id="COG1057">
    <property type="taxonomic scope" value="Bacteria"/>
</dbReference>
<dbReference type="HOGENOM" id="CLU_069765_1_1_11"/>
<dbReference type="UniPathway" id="UPA00253">
    <property type="reaction ID" value="UER00332"/>
</dbReference>
<dbReference type="Proteomes" id="UP000001937">
    <property type="component" value="Chromosome"/>
</dbReference>
<dbReference type="GO" id="GO:0005524">
    <property type="term" value="F:ATP binding"/>
    <property type="evidence" value="ECO:0007669"/>
    <property type="project" value="UniProtKB-KW"/>
</dbReference>
<dbReference type="GO" id="GO:0004515">
    <property type="term" value="F:nicotinate-nucleotide adenylyltransferase activity"/>
    <property type="evidence" value="ECO:0007669"/>
    <property type="project" value="UniProtKB-UniRule"/>
</dbReference>
<dbReference type="GO" id="GO:0009435">
    <property type="term" value="P:NAD biosynthetic process"/>
    <property type="evidence" value="ECO:0007669"/>
    <property type="project" value="UniProtKB-UniRule"/>
</dbReference>
<dbReference type="CDD" id="cd02165">
    <property type="entry name" value="NMNAT"/>
    <property type="match status" value="1"/>
</dbReference>
<dbReference type="FunFam" id="3.40.50.620:FF:000039">
    <property type="entry name" value="Probable nicotinate-nucleotide adenylyltransferase"/>
    <property type="match status" value="1"/>
</dbReference>
<dbReference type="Gene3D" id="3.40.50.620">
    <property type="entry name" value="HUPs"/>
    <property type="match status" value="1"/>
</dbReference>
<dbReference type="HAMAP" id="MF_00244">
    <property type="entry name" value="NaMN_adenylyltr"/>
    <property type="match status" value="1"/>
</dbReference>
<dbReference type="InterPro" id="IPR004821">
    <property type="entry name" value="Cyt_trans-like"/>
</dbReference>
<dbReference type="InterPro" id="IPR005248">
    <property type="entry name" value="NadD/NMNAT"/>
</dbReference>
<dbReference type="InterPro" id="IPR014729">
    <property type="entry name" value="Rossmann-like_a/b/a_fold"/>
</dbReference>
<dbReference type="NCBIfam" id="TIGR00125">
    <property type="entry name" value="cyt_tran_rel"/>
    <property type="match status" value="1"/>
</dbReference>
<dbReference type="NCBIfam" id="TIGR00482">
    <property type="entry name" value="nicotinate (nicotinamide) nucleotide adenylyltransferase"/>
    <property type="match status" value="1"/>
</dbReference>
<dbReference type="NCBIfam" id="NF000840">
    <property type="entry name" value="PRK00071.1-3"/>
    <property type="match status" value="1"/>
</dbReference>
<dbReference type="PANTHER" id="PTHR39321">
    <property type="entry name" value="NICOTINATE-NUCLEOTIDE ADENYLYLTRANSFERASE-RELATED"/>
    <property type="match status" value="1"/>
</dbReference>
<dbReference type="PANTHER" id="PTHR39321:SF3">
    <property type="entry name" value="PHOSPHOPANTETHEINE ADENYLYLTRANSFERASE"/>
    <property type="match status" value="1"/>
</dbReference>
<dbReference type="Pfam" id="PF01467">
    <property type="entry name" value="CTP_transf_like"/>
    <property type="match status" value="1"/>
</dbReference>
<dbReference type="SUPFAM" id="SSF52374">
    <property type="entry name" value="Nucleotidylyl transferase"/>
    <property type="match status" value="1"/>
</dbReference>
<accession>Q2JDN2</accession>
<protein>
    <recommendedName>
        <fullName evidence="1">Probable nicotinate-nucleotide adenylyltransferase</fullName>
        <ecNumber evidence="1">2.7.7.18</ecNumber>
    </recommendedName>
    <alternativeName>
        <fullName evidence="1">Deamido-NAD(+) diphosphorylase</fullName>
    </alternativeName>
    <alternativeName>
        <fullName evidence="1">Deamido-NAD(+) pyrophosphorylase</fullName>
    </alternativeName>
    <alternativeName>
        <fullName evidence="1">Nicotinate mononucleotide adenylyltransferase</fullName>
        <shortName evidence="1">NaMN adenylyltransferase</shortName>
    </alternativeName>
</protein>
<proteinExistence type="inferred from homology"/>
<evidence type="ECO:0000255" key="1">
    <source>
        <dbReference type="HAMAP-Rule" id="MF_00244"/>
    </source>
</evidence>
<evidence type="ECO:0000305" key="2"/>
<name>NADD_FRACC</name>
<feature type="chain" id="PRO_0000336693" description="Probable nicotinate-nucleotide adenylyltransferase">
    <location>
        <begin position="1"/>
        <end position="190"/>
    </location>
</feature>
<sequence length="190" mass="21035">MGGTFDPVHNGHLVAASEVAALFDLDEVVFVPSGQPWQKIHRKVSAAEDRYLMTFLATAGNPQFTVSRIEIDRGGATYTIDTLRDLRAARPDDELFFITGADALAQIFTWRDHRELFELAHFVGVNRPGYHLALDAGLPTGAVSLLEVPALAISSSDIRERVGRRAPIWYLTPDGVVRYIAKRRLYQGAS</sequence>
<comment type="function">
    <text evidence="1">Catalyzes the reversible adenylation of nicotinate mononucleotide (NaMN) to nicotinic acid adenine dinucleotide (NaAD).</text>
</comment>
<comment type="catalytic activity">
    <reaction evidence="1">
        <text>nicotinate beta-D-ribonucleotide + ATP + H(+) = deamido-NAD(+) + diphosphate</text>
        <dbReference type="Rhea" id="RHEA:22860"/>
        <dbReference type="ChEBI" id="CHEBI:15378"/>
        <dbReference type="ChEBI" id="CHEBI:30616"/>
        <dbReference type="ChEBI" id="CHEBI:33019"/>
        <dbReference type="ChEBI" id="CHEBI:57502"/>
        <dbReference type="ChEBI" id="CHEBI:58437"/>
        <dbReference type="EC" id="2.7.7.18"/>
    </reaction>
</comment>
<comment type="pathway">
    <text evidence="1">Cofactor biosynthesis; NAD(+) biosynthesis; deamido-NAD(+) from nicotinate D-ribonucleotide: step 1/1.</text>
</comment>
<comment type="similarity">
    <text evidence="1">Belongs to the NadD family.</text>
</comment>
<comment type="sequence caution" evidence="2">
    <conflict type="erroneous initiation">
        <sequence resource="EMBL-CDS" id="ABD10610"/>
    </conflict>
</comment>